<comment type="function">
    <text evidence="1">Required for replicative DNA synthesis. This DNA polymerase also exhibits 3' to 5' exonuclease activity.</text>
</comment>
<comment type="catalytic activity">
    <reaction evidence="1">
        <text>DNA(n) + a 2'-deoxyribonucleoside 5'-triphosphate = DNA(n+1) + diphosphate</text>
        <dbReference type="Rhea" id="RHEA:22508"/>
        <dbReference type="Rhea" id="RHEA-COMP:17339"/>
        <dbReference type="Rhea" id="RHEA-COMP:17340"/>
        <dbReference type="ChEBI" id="CHEBI:33019"/>
        <dbReference type="ChEBI" id="CHEBI:61560"/>
        <dbReference type="ChEBI" id="CHEBI:173112"/>
        <dbReference type="EC" id="2.7.7.7"/>
    </reaction>
</comment>
<comment type="subcellular location">
    <subcellularLocation>
        <location evidence="1">Cytoplasm</location>
    </subcellularLocation>
</comment>
<comment type="similarity">
    <text evidence="1">Belongs to the DNA polymerase type-C family. PolC subfamily.</text>
</comment>
<feature type="chain" id="PRO_0000204607" description="DNA polymerase III PolC-type">
    <location>
        <begin position="1"/>
        <end position="1442"/>
    </location>
</feature>
<feature type="domain" description="Exonuclease">
    <location>
        <begin position="409"/>
        <end position="568"/>
    </location>
</feature>
<reference key="1">
    <citation type="journal article" date="2000" name="Nature">
        <title>The complete sequence of the mucosal pathogen Ureaplasma urealyticum.</title>
        <authorList>
            <person name="Glass J.I."/>
            <person name="Lefkowitz E.J."/>
            <person name="Glass J.S."/>
            <person name="Heiner C.R."/>
            <person name="Chen E.Y."/>
            <person name="Cassell G.H."/>
        </authorList>
    </citation>
    <scope>NUCLEOTIDE SEQUENCE [LARGE SCALE GENOMIC DNA]</scope>
    <source>
        <strain>ATCC 700970</strain>
    </source>
</reference>
<sequence length="1442" mass="166229">METKNALFKKIVKISDQLLNKISIKKLTKDKKNNLFVYFDEFVDVTIIDELHQLSKTTLMHDLQIWYINNLKEVDHKKILTFFKKISEQNANLIFLEQINDLNTKIEYNSNLNSLILKINDKLIYDHFIANKLEILNILKVWSLPYSNFEIHFENLSSLLNEKHEQAVNEIISHHIQQQKHLEQQISQQQNFYNNQKANFNYYKNPSNKTITKLIDINPLMNNAKIRAYVFLKKIDILKSGAIAYKLNVIDDSETLTIMTYLPSGEHPLKKFLDELKIDQLIEAEIDIVLDNMSKSGQVPIGKIKKICCVEDKHVKKQITPRLELNFHTKMSSLDAIISTQELIDFAVKNQLKTIGITDRNVVQAYPEIAKFSKKQDLKIIYGLETEELEDQIPLVLNVRDQNLDNATYVIFDIETTGLFPNFDEIIEFGAVIMQNNKQIGEKIQFFIKPIQQINENVTNLTNISQEMVNNAIDEKTALLKIKEIFDDHILVAHNGINFDINFINQRLLKWGLEPLKNPSIDTLMISRAINPFKSHRLGAICKKYEVDYNDESAHRADYDAIVLADVFKVMKNNLFNDFGITNLSEINTKLQTTMLKNRSFGNWINLYIKNQANVKDMYELVSISHTDMYYTRPTITTSFLANKKDKLIISNSIHESDLINALYSKNDEEIKRLIQRYDFITLPSLGSQKHLVYAKKITIENVQKAFKKLIYLALELNKIIIYSSSPYYFFKDDKKFYDVYVNTKGLEGKAHRFANEVYVPDLEYIDQKNAIDELAYLEDEKLINLIINENPVHINSWFDDSIQPLKEGLYAPKMEGVDQKTIDYVYHTAKKIYGENLPTIVEQRIKKELNSIIKHGFSVVYWISHLLVEKSMQDGYGVGSRGSVGSSLVATFLNITDVNPLTPHYLCPNCKKCEFITNADDGFDLAPKSCEQCQTPMLTDGHNIPFETFLGFDGDKVPDIDLNFSGVYQAVAHNFIKSIFGETHSYRAGTIGTMAQTSAENTVKKYFENRFNENKIIRDSTVSLYVQKCIDSKRTTGQHPGGIIIVPKEYSIWDFSPYNFPANDINETWKTTHFAFEYLHDSLLKFDILGHDNPTILKLLKDYTGIDERDVPMYDPLVMKSFSDISALNIKPSDVLNETTGAISIPEFGTRFVRGMLVDTKPKSFADLIRISGLSHGESVWLGNAQSLIKSGKLLKDVIACRDDIMTYLIRQNVEPKTAFLIMEDVRKGKKIKPEHQIILKELKVPEWYIESANKIKYMFPKAHATAYVMHAWKFAWYKIYYPLEYYAAFFSVRADNFDLFVINQGKEFIEKTYNDIEQRSKSRDPQKKVSSRELALQPIYEIVIELLARGFKISNISIEQSQATSYVIDKENNAIIPPFIAIQGLGETVANSIIEARNQKVFSTIEDLKNRTKISRTDLKNLRVLGVLDHLSETEQLTLF</sequence>
<gene>
    <name evidence="1" type="primary">polC</name>
    <name type="ordered locus">UU377</name>
</gene>
<evidence type="ECO:0000255" key="1">
    <source>
        <dbReference type="HAMAP-Rule" id="MF_00356"/>
    </source>
</evidence>
<accession>Q9PQB4</accession>
<name>DPO3_UREPA</name>
<proteinExistence type="inferred from homology"/>
<keyword id="KW-0963">Cytoplasm</keyword>
<keyword id="KW-0235">DNA replication</keyword>
<keyword id="KW-0239">DNA-directed DNA polymerase</keyword>
<keyword id="KW-0269">Exonuclease</keyword>
<keyword id="KW-0378">Hydrolase</keyword>
<keyword id="KW-0540">Nuclease</keyword>
<keyword id="KW-0548">Nucleotidyltransferase</keyword>
<keyword id="KW-1185">Reference proteome</keyword>
<keyword id="KW-0808">Transferase</keyword>
<protein>
    <recommendedName>
        <fullName evidence="1">DNA polymerase III PolC-type</fullName>
        <shortName evidence="1">PolIII</shortName>
        <ecNumber evidence="1">2.7.7.7</ecNumber>
    </recommendedName>
</protein>
<dbReference type="EC" id="2.7.7.7" evidence="1"/>
<dbReference type="EMBL" id="AF222894">
    <property type="protein sequence ID" value="AAF30786.1"/>
    <property type="molecule type" value="Genomic_DNA"/>
</dbReference>
<dbReference type="RefSeq" id="WP_010891752.1">
    <property type="nucleotide sequence ID" value="NC_002162.1"/>
</dbReference>
<dbReference type="SMR" id="Q9PQB4"/>
<dbReference type="STRING" id="273119.UU377"/>
<dbReference type="EnsemblBacteria" id="AAF30786">
    <property type="protein sequence ID" value="AAF30786"/>
    <property type="gene ID" value="UU377"/>
</dbReference>
<dbReference type="GeneID" id="29672520"/>
<dbReference type="KEGG" id="uur:UU377"/>
<dbReference type="PATRIC" id="fig|273119.6.peg.391"/>
<dbReference type="eggNOG" id="COG2176">
    <property type="taxonomic scope" value="Bacteria"/>
</dbReference>
<dbReference type="HOGENOM" id="CLU_003297_1_0_14"/>
<dbReference type="OrthoDB" id="9804290at2"/>
<dbReference type="Proteomes" id="UP000000423">
    <property type="component" value="Chromosome"/>
</dbReference>
<dbReference type="GO" id="GO:0005737">
    <property type="term" value="C:cytoplasm"/>
    <property type="evidence" value="ECO:0007669"/>
    <property type="project" value="UniProtKB-SubCell"/>
</dbReference>
<dbReference type="GO" id="GO:0008408">
    <property type="term" value="F:3'-5' exonuclease activity"/>
    <property type="evidence" value="ECO:0007669"/>
    <property type="project" value="UniProtKB-UniRule"/>
</dbReference>
<dbReference type="GO" id="GO:0003677">
    <property type="term" value="F:DNA binding"/>
    <property type="evidence" value="ECO:0007669"/>
    <property type="project" value="UniProtKB-UniRule"/>
</dbReference>
<dbReference type="GO" id="GO:0003887">
    <property type="term" value="F:DNA-directed DNA polymerase activity"/>
    <property type="evidence" value="ECO:0007669"/>
    <property type="project" value="UniProtKB-UniRule"/>
</dbReference>
<dbReference type="GO" id="GO:0006261">
    <property type="term" value="P:DNA-templated DNA replication"/>
    <property type="evidence" value="ECO:0007669"/>
    <property type="project" value="UniProtKB-UniRule"/>
</dbReference>
<dbReference type="CDD" id="cd06127">
    <property type="entry name" value="DEDDh"/>
    <property type="match status" value="1"/>
</dbReference>
<dbReference type="FunFam" id="3.30.420.10:FF:000045">
    <property type="entry name" value="3'-5' exonuclease DinG"/>
    <property type="match status" value="1"/>
</dbReference>
<dbReference type="Gene3D" id="1.10.150.870">
    <property type="match status" value="1"/>
</dbReference>
<dbReference type="Gene3D" id="3.30.1900.20">
    <property type="match status" value="1"/>
</dbReference>
<dbReference type="Gene3D" id="6.10.140.1510">
    <property type="match status" value="1"/>
</dbReference>
<dbReference type="Gene3D" id="3.20.20.140">
    <property type="entry name" value="Metal-dependent hydrolases"/>
    <property type="match status" value="2"/>
</dbReference>
<dbReference type="Gene3D" id="1.10.150.700">
    <property type="entry name" value="PolC, middle finger domain"/>
    <property type="match status" value="1"/>
</dbReference>
<dbReference type="Gene3D" id="3.30.420.10">
    <property type="entry name" value="Ribonuclease H-like superfamily/Ribonuclease H"/>
    <property type="match status" value="1"/>
</dbReference>
<dbReference type="HAMAP" id="MF_00356">
    <property type="entry name" value="DNApol_PolC"/>
    <property type="match status" value="1"/>
</dbReference>
<dbReference type="InterPro" id="IPR011708">
    <property type="entry name" value="DNA_pol3_alpha_NTPase_dom"/>
</dbReference>
<dbReference type="InterPro" id="IPR040982">
    <property type="entry name" value="DNA_pol3_finger"/>
</dbReference>
<dbReference type="InterPro" id="IPR004805">
    <property type="entry name" value="DnaE2/DnaE/PolC"/>
</dbReference>
<dbReference type="InterPro" id="IPR029460">
    <property type="entry name" value="DNAPol_HHH"/>
</dbReference>
<dbReference type="InterPro" id="IPR006054">
    <property type="entry name" value="DnaQ"/>
</dbReference>
<dbReference type="InterPro" id="IPR013520">
    <property type="entry name" value="Exonuclease_RNaseT/DNA_pol3"/>
</dbReference>
<dbReference type="InterPro" id="IPR004013">
    <property type="entry name" value="PHP_dom"/>
</dbReference>
<dbReference type="InterPro" id="IPR003141">
    <property type="entry name" value="Pol/His_phosphatase_N"/>
</dbReference>
<dbReference type="InterPro" id="IPR016195">
    <property type="entry name" value="Pol/histidinol_Pase-like"/>
</dbReference>
<dbReference type="InterPro" id="IPR006308">
    <property type="entry name" value="Pol_III_a_PolC-type_gram_pos"/>
</dbReference>
<dbReference type="InterPro" id="IPR044923">
    <property type="entry name" value="PolC_middle_finger_sf"/>
</dbReference>
<dbReference type="InterPro" id="IPR012337">
    <property type="entry name" value="RNaseH-like_sf"/>
</dbReference>
<dbReference type="InterPro" id="IPR036397">
    <property type="entry name" value="RNaseH_sf"/>
</dbReference>
<dbReference type="NCBIfam" id="TIGR00573">
    <property type="entry name" value="dnaq"/>
    <property type="match status" value="1"/>
</dbReference>
<dbReference type="NCBIfam" id="TIGR01405">
    <property type="entry name" value="polC_Gram_pos"/>
    <property type="match status" value="1"/>
</dbReference>
<dbReference type="NCBIfam" id="NF001688">
    <property type="entry name" value="PRK00448.1"/>
    <property type="match status" value="1"/>
</dbReference>
<dbReference type="PANTHER" id="PTHR32294:SF5">
    <property type="entry name" value="DNA POLYMERASE III POLC-TYPE"/>
    <property type="match status" value="1"/>
</dbReference>
<dbReference type="PANTHER" id="PTHR32294">
    <property type="entry name" value="DNA POLYMERASE III SUBUNIT ALPHA"/>
    <property type="match status" value="1"/>
</dbReference>
<dbReference type="Pfam" id="PF07733">
    <property type="entry name" value="DNA_pol3_alpha"/>
    <property type="match status" value="2"/>
</dbReference>
<dbReference type="Pfam" id="PF17657">
    <property type="entry name" value="DNA_pol3_finger"/>
    <property type="match status" value="1"/>
</dbReference>
<dbReference type="Pfam" id="PF14579">
    <property type="entry name" value="HHH_6"/>
    <property type="match status" value="1"/>
</dbReference>
<dbReference type="Pfam" id="PF02811">
    <property type="entry name" value="PHP"/>
    <property type="match status" value="1"/>
</dbReference>
<dbReference type="Pfam" id="PF00929">
    <property type="entry name" value="RNase_T"/>
    <property type="match status" value="1"/>
</dbReference>
<dbReference type="SMART" id="SM00479">
    <property type="entry name" value="EXOIII"/>
    <property type="match status" value="1"/>
</dbReference>
<dbReference type="SMART" id="SM00481">
    <property type="entry name" value="POLIIIAc"/>
    <property type="match status" value="1"/>
</dbReference>
<dbReference type="SUPFAM" id="SSF160975">
    <property type="entry name" value="AF1531-like"/>
    <property type="match status" value="1"/>
</dbReference>
<dbReference type="SUPFAM" id="SSF89550">
    <property type="entry name" value="PHP domain-like"/>
    <property type="match status" value="1"/>
</dbReference>
<dbReference type="SUPFAM" id="SSF53098">
    <property type="entry name" value="Ribonuclease H-like"/>
    <property type="match status" value="1"/>
</dbReference>
<organism>
    <name type="scientific">Ureaplasma parvum serovar 3 (strain ATCC 700970)</name>
    <dbReference type="NCBI Taxonomy" id="273119"/>
    <lineage>
        <taxon>Bacteria</taxon>
        <taxon>Bacillati</taxon>
        <taxon>Mycoplasmatota</taxon>
        <taxon>Mycoplasmoidales</taxon>
        <taxon>Mycoplasmoidaceae</taxon>
        <taxon>Ureaplasma</taxon>
    </lineage>
</organism>